<gene>
    <name evidence="1" type="primary">rplC</name>
    <name type="ordered locus">Psyr_4548</name>
</gene>
<proteinExistence type="inferred from homology"/>
<evidence type="ECO:0000255" key="1">
    <source>
        <dbReference type="HAMAP-Rule" id="MF_01325"/>
    </source>
</evidence>
<evidence type="ECO:0000305" key="2"/>
<accession>Q4ZMP4</accession>
<dbReference type="EMBL" id="CP000075">
    <property type="protein sequence ID" value="AAY39578.1"/>
    <property type="molecule type" value="Genomic_DNA"/>
</dbReference>
<dbReference type="RefSeq" id="WP_002555490.1">
    <property type="nucleotide sequence ID" value="NC_007005.1"/>
</dbReference>
<dbReference type="RefSeq" id="YP_237616.1">
    <property type="nucleotide sequence ID" value="NC_007005.1"/>
</dbReference>
<dbReference type="SMR" id="Q4ZMP4"/>
<dbReference type="STRING" id="205918.Psyr_4548"/>
<dbReference type="GeneID" id="96221030"/>
<dbReference type="KEGG" id="psb:Psyr_4548"/>
<dbReference type="PATRIC" id="fig|205918.7.peg.4687"/>
<dbReference type="eggNOG" id="COG0087">
    <property type="taxonomic scope" value="Bacteria"/>
</dbReference>
<dbReference type="HOGENOM" id="CLU_044142_4_1_6"/>
<dbReference type="OrthoDB" id="9806135at2"/>
<dbReference type="Proteomes" id="UP000000426">
    <property type="component" value="Chromosome"/>
</dbReference>
<dbReference type="GO" id="GO:0022625">
    <property type="term" value="C:cytosolic large ribosomal subunit"/>
    <property type="evidence" value="ECO:0007669"/>
    <property type="project" value="TreeGrafter"/>
</dbReference>
<dbReference type="GO" id="GO:0019843">
    <property type="term" value="F:rRNA binding"/>
    <property type="evidence" value="ECO:0007669"/>
    <property type="project" value="UniProtKB-UniRule"/>
</dbReference>
<dbReference type="GO" id="GO:0003735">
    <property type="term" value="F:structural constituent of ribosome"/>
    <property type="evidence" value="ECO:0007669"/>
    <property type="project" value="InterPro"/>
</dbReference>
<dbReference type="GO" id="GO:0006412">
    <property type="term" value="P:translation"/>
    <property type="evidence" value="ECO:0007669"/>
    <property type="project" value="UniProtKB-UniRule"/>
</dbReference>
<dbReference type="FunFam" id="2.40.30.10:FF:000004">
    <property type="entry name" value="50S ribosomal protein L3"/>
    <property type="match status" value="1"/>
</dbReference>
<dbReference type="FunFam" id="3.30.160.810:FF:000001">
    <property type="entry name" value="50S ribosomal protein L3"/>
    <property type="match status" value="1"/>
</dbReference>
<dbReference type="Gene3D" id="3.30.160.810">
    <property type="match status" value="1"/>
</dbReference>
<dbReference type="Gene3D" id="2.40.30.10">
    <property type="entry name" value="Translation factors"/>
    <property type="match status" value="1"/>
</dbReference>
<dbReference type="HAMAP" id="MF_01325_B">
    <property type="entry name" value="Ribosomal_uL3_B"/>
    <property type="match status" value="1"/>
</dbReference>
<dbReference type="InterPro" id="IPR000597">
    <property type="entry name" value="Ribosomal_uL3"/>
</dbReference>
<dbReference type="InterPro" id="IPR019927">
    <property type="entry name" value="Ribosomal_uL3_bac/org-type"/>
</dbReference>
<dbReference type="InterPro" id="IPR019926">
    <property type="entry name" value="Ribosomal_uL3_CS"/>
</dbReference>
<dbReference type="InterPro" id="IPR009000">
    <property type="entry name" value="Transl_B-barrel_sf"/>
</dbReference>
<dbReference type="NCBIfam" id="TIGR03625">
    <property type="entry name" value="L3_bact"/>
    <property type="match status" value="1"/>
</dbReference>
<dbReference type="PANTHER" id="PTHR11229">
    <property type="entry name" value="50S RIBOSOMAL PROTEIN L3"/>
    <property type="match status" value="1"/>
</dbReference>
<dbReference type="PANTHER" id="PTHR11229:SF16">
    <property type="entry name" value="LARGE RIBOSOMAL SUBUNIT PROTEIN UL3C"/>
    <property type="match status" value="1"/>
</dbReference>
<dbReference type="Pfam" id="PF00297">
    <property type="entry name" value="Ribosomal_L3"/>
    <property type="match status" value="1"/>
</dbReference>
<dbReference type="SUPFAM" id="SSF50447">
    <property type="entry name" value="Translation proteins"/>
    <property type="match status" value="1"/>
</dbReference>
<dbReference type="PROSITE" id="PS00474">
    <property type="entry name" value="RIBOSOMAL_L3"/>
    <property type="match status" value="1"/>
</dbReference>
<feature type="chain" id="PRO_0000241392" description="Large ribosomal subunit protein uL3">
    <location>
        <begin position="1"/>
        <end position="211"/>
    </location>
</feature>
<feature type="modified residue" description="N5-methylglutamine" evidence="1">
    <location>
        <position position="150"/>
    </location>
</feature>
<sequence>MTIGVVGRKCGMTRIFTEEGVSIPVTVIEIEPNRVTQFKTEETDGYRAVQVTVGERRASRVTAAQAGHFAKANVAAGRTVMEFRLEEGDYQAGDQINAEIFAAGQLVDVTGQSKGKGFQGTIKRWNFRGQDNTHGNSVSHRVPGSIGQCQTPGRVFKGKKMSGHMGAERVTVQSLEVVRVDAERNLLLVKGAVPGATGGNLVVRPAAKARG</sequence>
<organism>
    <name type="scientific">Pseudomonas syringae pv. syringae (strain B728a)</name>
    <dbReference type="NCBI Taxonomy" id="205918"/>
    <lineage>
        <taxon>Bacteria</taxon>
        <taxon>Pseudomonadati</taxon>
        <taxon>Pseudomonadota</taxon>
        <taxon>Gammaproteobacteria</taxon>
        <taxon>Pseudomonadales</taxon>
        <taxon>Pseudomonadaceae</taxon>
        <taxon>Pseudomonas</taxon>
        <taxon>Pseudomonas syringae</taxon>
    </lineage>
</organism>
<keyword id="KW-0488">Methylation</keyword>
<keyword id="KW-0687">Ribonucleoprotein</keyword>
<keyword id="KW-0689">Ribosomal protein</keyword>
<keyword id="KW-0694">RNA-binding</keyword>
<keyword id="KW-0699">rRNA-binding</keyword>
<protein>
    <recommendedName>
        <fullName evidence="1">Large ribosomal subunit protein uL3</fullName>
    </recommendedName>
    <alternativeName>
        <fullName evidence="2">50S ribosomal protein L3</fullName>
    </alternativeName>
</protein>
<reference key="1">
    <citation type="journal article" date="2005" name="Proc. Natl. Acad. Sci. U.S.A.">
        <title>Comparison of the complete genome sequences of Pseudomonas syringae pv. syringae B728a and pv. tomato DC3000.</title>
        <authorList>
            <person name="Feil H."/>
            <person name="Feil W.S."/>
            <person name="Chain P."/>
            <person name="Larimer F."/>
            <person name="Dibartolo G."/>
            <person name="Copeland A."/>
            <person name="Lykidis A."/>
            <person name="Trong S."/>
            <person name="Nolan M."/>
            <person name="Goltsman E."/>
            <person name="Thiel J."/>
            <person name="Malfatti S."/>
            <person name="Loper J.E."/>
            <person name="Lapidus A."/>
            <person name="Detter J.C."/>
            <person name="Land M."/>
            <person name="Richardson P.M."/>
            <person name="Kyrpides N.C."/>
            <person name="Ivanova N."/>
            <person name="Lindow S.E."/>
        </authorList>
    </citation>
    <scope>NUCLEOTIDE SEQUENCE [LARGE SCALE GENOMIC DNA]</scope>
    <source>
        <strain>B728a</strain>
    </source>
</reference>
<comment type="function">
    <text evidence="1">One of the primary rRNA binding proteins, it binds directly near the 3'-end of the 23S rRNA, where it nucleates assembly of the 50S subunit.</text>
</comment>
<comment type="subunit">
    <text evidence="1">Part of the 50S ribosomal subunit. Forms a cluster with proteins L14 and L19.</text>
</comment>
<comment type="PTM">
    <text evidence="1">Methylated by PrmB.</text>
</comment>
<comment type="similarity">
    <text evidence="1">Belongs to the universal ribosomal protein uL3 family.</text>
</comment>
<name>RL3_PSEU2</name>